<name>MSHD_MYCPA</name>
<keyword id="KW-0012">Acyltransferase</keyword>
<keyword id="KW-1185">Reference proteome</keyword>
<keyword id="KW-0677">Repeat</keyword>
<keyword id="KW-0808">Transferase</keyword>
<comment type="function">
    <text evidence="1">Catalyzes the transfer of acetyl from acetyl-CoA to desacetylmycothiol (Cys-GlcN-Ins) to form mycothiol.</text>
</comment>
<comment type="catalytic activity">
    <reaction evidence="1">
        <text>1D-myo-inositol 2-(L-cysteinylamino)-2-deoxy-alpha-D-glucopyranoside + acetyl-CoA = mycothiol + CoA + H(+)</text>
        <dbReference type="Rhea" id="RHEA:26172"/>
        <dbReference type="ChEBI" id="CHEBI:15378"/>
        <dbReference type="ChEBI" id="CHEBI:16768"/>
        <dbReference type="ChEBI" id="CHEBI:57287"/>
        <dbReference type="ChEBI" id="CHEBI:57288"/>
        <dbReference type="ChEBI" id="CHEBI:58887"/>
        <dbReference type="EC" id="2.3.1.189"/>
    </reaction>
</comment>
<comment type="subunit">
    <text evidence="1">Monomer.</text>
</comment>
<comment type="similarity">
    <text evidence="1">Belongs to the acetyltransferase family. MshD subfamily.</text>
</comment>
<dbReference type="EC" id="2.3.1.189" evidence="1"/>
<dbReference type="EMBL" id="AE016958">
    <property type="protein sequence ID" value="AAS02967.1"/>
    <property type="molecule type" value="Genomic_DNA"/>
</dbReference>
<dbReference type="RefSeq" id="WP_003875811.1">
    <property type="nucleotide sequence ID" value="NZ_CP106873.1"/>
</dbReference>
<dbReference type="SMR" id="Q743D5"/>
<dbReference type="STRING" id="262316.MAP_0650"/>
<dbReference type="KEGG" id="mpa:MAP_0650"/>
<dbReference type="eggNOG" id="COG0454">
    <property type="taxonomic scope" value="Bacteria"/>
</dbReference>
<dbReference type="eggNOG" id="COG0456">
    <property type="taxonomic scope" value="Bacteria"/>
</dbReference>
<dbReference type="HOGENOM" id="CLU_068014_0_0_11"/>
<dbReference type="Proteomes" id="UP000000580">
    <property type="component" value="Chromosome"/>
</dbReference>
<dbReference type="GO" id="GO:0035447">
    <property type="term" value="F:mycothiol synthase activity"/>
    <property type="evidence" value="ECO:0007669"/>
    <property type="project" value="UniProtKB-UniRule"/>
</dbReference>
<dbReference type="GO" id="GO:0008999">
    <property type="term" value="F:protein-N-terminal-alanine acetyltransferase activity"/>
    <property type="evidence" value="ECO:0007669"/>
    <property type="project" value="TreeGrafter"/>
</dbReference>
<dbReference type="GO" id="GO:0010125">
    <property type="term" value="P:mycothiol biosynthetic process"/>
    <property type="evidence" value="ECO:0007669"/>
    <property type="project" value="UniProtKB-UniRule"/>
</dbReference>
<dbReference type="CDD" id="cd04301">
    <property type="entry name" value="NAT_SF"/>
    <property type="match status" value="2"/>
</dbReference>
<dbReference type="Gene3D" id="3.40.630.30">
    <property type="match status" value="1"/>
</dbReference>
<dbReference type="HAMAP" id="MF_01698">
    <property type="entry name" value="MshD"/>
    <property type="match status" value="1"/>
</dbReference>
<dbReference type="InterPro" id="IPR016181">
    <property type="entry name" value="Acyl_CoA_acyltransferase"/>
</dbReference>
<dbReference type="InterPro" id="IPR000182">
    <property type="entry name" value="GNAT_dom"/>
</dbReference>
<dbReference type="InterPro" id="IPR050276">
    <property type="entry name" value="MshD_Acetyltransferase"/>
</dbReference>
<dbReference type="InterPro" id="IPR017813">
    <property type="entry name" value="Mycothiol_AcTrfase"/>
</dbReference>
<dbReference type="NCBIfam" id="TIGR03448">
    <property type="entry name" value="mycothiol_MshD"/>
    <property type="match status" value="1"/>
</dbReference>
<dbReference type="PANTHER" id="PTHR43617">
    <property type="entry name" value="L-AMINO ACID N-ACETYLTRANSFERASE"/>
    <property type="match status" value="1"/>
</dbReference>
<dbReference type="PANTHER" id="PTHR43617:SF31">
    <property type="entry name" value="MYCOTHIOL ACETYLTRANSFERASE"/>
    <property type="match status" value="1"/>
</dbReference>
<dbReference type="Pfam" id="PF00583">
    <property type="entry name" value="Acetyltransf_1"/>
    <property type="match status" value="2"/>
</dbReference>
<dbReference type="PIRSF" id="PIRSF021524">
    <property type="entry name" value="MSH_acetyltransferase"/>
    <property type="match status" value="1"/>
</dbReference>
<dbReference type="SUPFAM" id="SSF55729">
    <property type="entry name" value="Acyl-CoA N-acyltransferases (Nat)"/>
    <property type="match status" value="1"/>
</dbReference>
<dbReference type="PROSITE" id="PS51186">
    <property type="entry name" value="GNAT"/>
    <property type="match status" value="2"/>
</dbReference>
<accession>Q743D5</accession>
<feature type="chain" id="PRO_0000400275" description="Mycothiol acetyltransferase">
    <location>
        <begin position="1"/>
        <end position="316"/>
    </location>
</feature>
<feature type="domain" description="N-acetyltransferase 1" evidence="1">
    <location>
        <begin position="16"/>
        <end position="153"/>
    </location>
</feature>
<feature type="domain" description="N-acetyltransferase 2" evidence="1">
    <location>
        <begin position="156"/>
        <end position="316"/>
    </location>
</feature>
<feature type="binding site" evidence="1">
    <location>
        <position position="36"/>
    </location>
    <ligand>
        <name>1D-myo-inositol 2-(L-cysteinylamino)-2-deoxy-alpha-D-glucopyranoside</name>
        <dbReference type="ChEBI" id="CHEBI:58887"/>
    </ligand>
</feature>
<feature type="binding site" evidence="1">
    <location>
        <begin position="83"/>
        <end position="85"/>
    </location>
    <ligand>
        <name>acetyl-CoA</name>
        <dbReference type="ChEBI" id="CHEBI:57288"/>
        <label>1</label>
    </ligand>
</feature>
<feature type="binding site" evidence="1">
    <location>
        <begin position="91"/>
        <end position="96"/>
    </location>
    <ligand>
        <name>acetyl-CoA</name>
        <dbReference type="ChEBI" id="CHEBI:57288"/>
        <label>1</label>
    </ligand>
</feature>
<feature type="binding site" evidence="1">
    <location>
        <position position="183"/>
    </location>
    <ligand>
        <name>1D-myo-inositol 2-(L-cysteinylamino)-2-deoxy-alpha-D-glucopyranoside</name>
        <dbReference type="ChEBI" id="CHEBI:58887"/>
    </ligand>
</feature>
<feature type="binding site" evidence="1">
    <location>
        <position position="228"/>
    </location>
    <ligand>
        <name>1D-myo-inositol 2-(L-cysteinylamino)-2-deoxy-alpha-D-glucopyranoside</name>
        <dbReference type="ChEBI" id="CHEBI:58887"/>
    </ligand>
</feature>
<feature type="binding site" evidence="1">
    <location>
        <position position="238"/>
    </location>
    <ligand>
        <name>1D-myo-inositol 2-(L-cysteinylamino)-2-deoxy-alpha-D-glucopyranoside</name>
        <dbReference type="ChEBI" id="CHEBI:58887"/>
    </ligand>
</feature>
<feature type="binding site" evidence="1">
    <location>
        <begin position="242"/>
        <end position="244"/>
    </location>
    <ligand>
        <name>acetyl-CoA</name>
        <dbReference type="ChEBI" id="CHEBI:57288"/>
        <label>2</label>
    </ligand>
</feature>
<feature type="binding site" evidence="1">
    <location>
        <begin position="249"/>
        <end position="255"/>
    </location>
    <ligand>
        <name>acetyl-CoA</name>
        <dbReference type="ChEBI" id="CHEBI:57288"/>
        <label>2</label>
    </ligand>
</feature>
<feature type="binding site" evidence="1">
    <location>
        <position position="283"/>
    </location>
    <ligand>
        <name>1D-myo-inositol 2-(L-cysteinylamino)-2-deoxy-alpha-D-glucopyranoside</name>
        <dbReference type="ChEBI" id="CHEBI:58887"/>
    </ligand>
</feature>
<feature type="binding site" evidence="1">
    <location>
        <begin position="288"/>
        <end position="293"/>
    </location>
    <ligand>
        <name>acetyl-CoA</name>
        <dbReference type="ChEBI" id="CHEBI:57288"/>
        <label>2</label>
    </ligand>
</feature>
<protein>
    <recommendedName>
        <fullName evidence="1">Mycothiol acetyltransferase</fullName>
        <shortName evidence="1">MSH acetyltransferase</shortName>
        <ecNumber evidence="1">2.3.1.189</ecNumber>
    </recommendedName>
    <alternativeName>
        <fullName evidence="1">Mycothiol synthase</fullName>
    </alternativeName>
</protein>
<gene>
    <name evidence="1" type="primary">mshD</name>
    <name type="ordered locus">MAP_0650</name>
</gene>
<evidence type="ECO:0000255" key="1">
    <source>
        <dbReference type="HAMAP-Rule" id="MF_01698"/>
    </source>
</evidence>
<organism>
    <name type="scientific">Mycolicibacterium paratuberculosis (strain ATCC BAA-968 / K-10)</name>
    <name type="common">Mycobacterium paratuberculosis</name>
    <dbReference type="NCBI Taxonomy" id="262316"/>
    <lineage>
        <taxon>Bacteria</taxon>
        <taxon>Bacillati</taxon>
        <taxon>Actinomycetota</taxon>
        <taxon>Actinomycetes</taxon>
        <taxon>Mycobacteriales</taxon>
        <taxon>Mycobacteriaceae</taxon>
        <taxon>Mycobacterium</taxon>
        <taxon>Mycobacterium avium complex (MAC)</taxon>
    </lineage>
</organism>
<sequence>MTAADWRRTLNPQEQREVRELVGAATEFDAVAPVGEQVLRELGHDRTEHLLIRGSVSGGAADAVVGYLNLTPPRDAQPQMAELVVHPRARRRGIGSALARAALAKTGAANRFWAHGTLEPARATAAALGLSPVRELMQMRRSLRDLPDSVPAVPGVRIRTYAGPADDAELLRVNNAAFAYHPEQGGWTDVELAERRAEPWFDPAGLFLAFGDDDSDRPGRLLGFHWTKVHLDQPGLGEVYVVGVDPCAQGRGLGQALTAVGIEWLARRLGAGDSAADPTVMLYVEADNVAAVRTYQRLGFTTYSVDTAYAVPPAAN</sequence>
<reference key="1">
    <citation type="journal article" date="2005" name="Proc. Natl. Acad. Sci. U.S.A.">
        <title>The complete genome sequence of Mycobacterium avium subspecies paratuberculosis.</title>
        <authorList>
            <person name="Li L."/>
            <person name="Bannantine J.P."/>
            <person name="Zhang Q."/>
            <person name="Amonsin A."/>
            <person name="May B.J."/>
            <person name="Alt D."/>
            <person name="Banerji N."/>
            <person name="Kanjilal S."/>
            <person name="Kapur V."/>
        </authorList>
    </citation>
    <scope>NUCLEOTIDE SEQUENCE [LARGE SCALE GENOMIC DNA]</scope>
    <source>
        <strain>ATCC BAA-968 / K-10</strain>
    </source>
</reference>
<proteinExistence type="inferred from homology"/>